<evidence type="ECO:0000250" key="1"/>
<evidence type="ECO:0000305" key="2"/>
<organism>
    <name type="scientific">Drosophila melanogaster</name>
    <name type="common">Fruit fly</name>
    <dbReference type="NCBI Taxonomy" id="7227"/>
    <lineage>
        <taxon>Eukaryota</taxon>
        <taxon>Metazoa</taxon>
        <taxon>Ecdysozoa</taxon>
        <taxon>Arthropoda</taxon>
        <taxon>Hexapoda</taxon>
        <taxon>Insecta</taxon>
        <taxon>Pterygota</taxon>
        <taxon>Neoptera</taxon>
        <taxon>Endopterygota</taxon>
        <taxon>Diptera</taxon>
        <taxon>Brachycera</taxon>
        <taxon>Muscomorpha</taxon>
        <taxon>Ephydroidea</taxon>
        <taxon>Drosophilidae</taxon>
        <taxon>Drosophila</taxon>
        <taxon>Sophophora</taxon>
    </lineage>
</organism>
<feature type="chain" id="PRO_0000197357" description="Metallothionein-4">
    <location>
        <begin position="1"/>
        <end position="44"/>
    </location>
</feature>
<protein>
    <recommendedName>
        <fullName>Metallothionein-4</fullName>
        <shortName>MT-4</shortName>
    </recommendedName>
    <alternativeName>
        <fullName>Metallothionein D</fullName>
    </alternativeName>
</protein>
<dbReference type="EMBL" id="AF546903">
    <property type="protein sequence ID" value="AAN73050.1"/>
    <property type="molecule type" value="mRNA"/>
</dbReference>
<dbReference type="EMBL" id="AE014297">
    <property type="protein sequence ID" value="AAO41579.2"/>
    <property type="molecule type" value="Genomic_DNA"/>
</dbReference>
<dbReference type="EMBL" id="BT025012">
    <property type="protein sequence ID" value="ABE01242.1"/>
    <property type="status" value="ALT_SEQ"/>
    <property type="molecule type" value="mRNA"/>
</dbReference>
<dbReference type="RefSeq" id="NP_788695.2">
    <property type="nucleotide sequence ID" value="NM_176518.2"/>
</dbReference>
<dbReference type="BioGRID" id="77518">
    <property type="interactions" value="2"/>
</dbReference>
<dbReference type="IntAct" id="Q8I9B4">
    <property type="interactions" value="2"/>
</dbReference>
<dbReference type="STRING" id="7227.FBpp0300409"/>
<dbReference type="PaxDb" id="7227-FBpp0300409"/>
<dbReference type="DNASU" id="326270"/>
<dbReference type="EnsemblMetazoa" id="FBtr0308064">
    <property type="protein sequence ID" value="FBpp0300409"/>
    <property type="gene ID" value="FBgn0053192"/>
</dbReference>
<dbReference type="GeneID" id="326270"/>
<dbReference type="KEGG" id="dme:Dmel_CG33192"/>
<dbReference type="AGR" id="FB:FBgn0053192"/>
<dbReference type="CTD" id="326270"/>
<dbReference type="FlyBase" id="FBgn0053192">
    <property type="gene designation" value="MtnD"/>
</dbReference>
<dbReference type="VEuPathDB" id="VectorBase:FBgn0053192"/>
<dbReference type="eggNOG" id="KOG4738">
    <property type="taxonomic scope" value="Eukaryota"/>
</dbReference>
<dbReference type="HOGENOM" id="CLU_217426_0_0_1"/>
<dbReference type="InParanoid" id="Q8I9B4"/>
<dbReference type="PhylomeDB" id="Q8I9B4"/>
<dbReference type="BioGRID-ORCS" id="326270">
    <property type="hits" value="0 hits in 1 CRISPR screen"/>
</dbReference>
<dbReference type="GenomeRNAi" id="326270"/>
<dbReference type="PRO" id="PR:Q8I9B4"/>
<dbReference type="Proteomes" id="UP000000803">
    <property type="component" value="Chromosome 3R"/>
</dbReference>
<dbReference type="Bgee" id="FBgn0053192">
    <property type="expression patterns" value="Expressed in copper cell (Drosophila) in digestive tract and 56 other cell types or tissues"/>
</dbReference>
<dbReference type="GO" id="GO:0046872">
    <property type="term" value="F:metal ion binding"/>
    <property type="evidence" value="ECO:0000314"/>
    <property type="project" value="FlyBase"/>
</dbReference>
<dbReference type="GO" id="GO:0140961">
    <property type="term" value="P:cellular detoxification of metal ion"/>
    <property type="evidence" value="ECO:0000315"/>
    <property type="project" value="FlyBase"/>
</dbReference>
<dbReference type="GO" id="GO:0046688">
    <property type="term" value="P:response to copper ion"/>
    <property type="evidence" value="ECO:0000314"/>
    <property type="project" value="FlyBase"/>
</dbReference>
<dbReference type="GO" id="GO:0010038">
    <property type="term" value="P:response to metal ion"/>
    <property type="evidence" value="ECO:0000314"/>
    <property type="project" value="FlyBase"/>
</dbReference>
<dbReference type="InterPro" id="IPR000966">
    <property type="entry name" value="Metalthion_5"/>
</dbReference>
<dbReference type="Pfam" id="PF02067">
    <property type="entry name" value="Metallothio_5"/>
    <property type="match status" value="1"/>
</dbReference>
<dbReference type="PRINTS" id="PR00872">
    <property type="entry name" value="MTDIPTERA"/>
</dbReference>
<reference key="1">
    <citation type="journal article" date="2003" name="EMBO J.">
        <title>Knockout of 'metal-responsive transcription factor' MTF-1 in Drosophila by homologous recombination reveals its central role in heavy metal homeostasis.</title>
        <authorList>
            <person name="Egli D."/>
            <person name="Selvaraj A."/>
            <person name="Yepiskoposyan H."/>
            <person name="Zhang B."/>
            <person name="Hafen E."/>
            <person name="Georgiev O."/>
            <person name="Schaffner W."/>
        </authorList>
    </citation>
    <scope>NUCLEOTIDE SEQUENCE [MRNA]</scope>
    <source>
        <strain>Canton-S</strain>
    </source>
</reference>
<reference key="2">
    <citation type="journal article" date="2000" name="Science">
        <title>The genome sequence of Drosophila melanogaster.</title>
        <authorList>
            <person name="Adams M.D."/>
            <person name="Celniker S.E."/>
            <person name="Holt R.A."/>
            <person name="Evans C.A."/>
            <person name="Gocayne J.D."/>
            <person name="Amanatides P.G."/>
            <person name="Scherer S.E."/>
            <person name="Li P.W."/>
            <person name="Hoskins R.A."/>
            <person name="Galle R.F."/>
            <person name="George R.A."/>
            <person name="Lewis S.E."/>
            <person name="Richards S."/>
            <person name="Ashburner M."/>
            <person name="Henderson S.N."/>
            <person name="Sutton G.G."/>
            <person name="Wortman J.R."/>
            <person name="Yandell M.D."/>
            <person name="Zhang Q."/>
            <person name="Chen L.X."/>
            <person name="Brandon R.C."/>
            <person name="Rogers Y.-H.C."/>
            <person name="Blazej R.G."/>
            <person name="Champe M."/>
            <person name="Pfeiffer B.D."/>
            <person name="Wan K.H."/>
            <person name="Doyle C."/>
            <person name="Baxter E.G."/>
            <person name="Helt G."/>
            <person name="Nelson C.R."/>
            <person name="Miklos G.L.G."/>
            <person name="Abril J.F."/>
            <person name="Agbayani A."/>
            <person name="An H.-J."/>
            <person name="Andrews-Pfannkoch C."/>
            <person name="Baldwin D."/>
            <person name="Ballew R.M."/>
            <person name="Basu A."/>
            <person name="Baxendale J."/>
            <person name="Bayraktaroglu L."/>
            <person name="Beasley E.M."/>
            <person name="Beeson K.Y."/>
            <person name="Benos P.V."/>
            <person name="Berman B.P."/>
            <person name="Bhandari D."/>
            <person name="Bolshakov S."/>
            <person name="Borkova D."/>
            <person name="Botchan M.R."/>
            <person name="Bouck J."/>
            <person name="Brokstein P."/>
            <person name="Brottier P."/>
            <person name="Burtis K.C."/>
            <person name="Busam D.A."/>
            <person name="Butler H."/>
            <person name="Cadieu E."/>
            <person name="Center A."/>
            <person name="Chandra I."/>
            <person name="Cherry J.M."/>
            <person name="Cawley S."/>
            <person name="Dahlke C."/>
            <person name="Davenport L.B."/>
            <person name="Davies P."/>
            <person name="de Pablos B."/>
            <person name="Delcher A."/>
            <person name="Deng Z."/>
            <person name="Mays A.D."/>
            <person name="Dew I."/>
            <person name="Dietz S.M."/>
            <person name="Dodson K."/>
            <person name="Doup L.E."/>
            <person name="Downes M."/>
            <person name="Dugan-Rocha S."/>
            <person name="Dunkov B.C."/>
            <person name="Dunn P."/>
            <person name="Durbin K.J."/>
            <person name="Evangelista C.C."/>
            <person name="Ferraz C."/>
            <person name="Ferriera S."/>
            <person name="Fleischmann W."/>
            <person name="Fosler C."/>
            <person name="Gabrielian A.E."/>
            <person name="Garg N.S."/>
            <person name="Gelbart W.M."/>
            <person name="Glasser K."/>
            <person name="Glodek A."/>
            <person name="Gong F."/>
            <person name="Gorrell J.H."/>
            <person name="Gu Z."/>
            <person name="Guan P."/>
            <person name="Harris M."/>
            <person name="Harris N.L."/>
            <person name="Harvey D.A."/>
            <person name="Heiman T.J."/>
            <person name="Hernandez J.R."/>
            <person name="Houck J."/>
            <person name="Hostin D."/>
            <person name="Houston K.A."/>
            <person name="Howland T.J."/>
            <person name="Wei M.-H."/>
            <person name="Ibegwam C."/>
            <person name="Jalali M."/>
            <person name="Kalush F."/>
            <person name="Karpen G.H."/>
            <person name="Ke Z."/>
            <person name="Kennison J.A."/>
            <person name="Ketchum K.A."/>
            <person name="Kimmel B.E."/>
            <person name="Kodira C.D."/>
            <person name="Kraft C.L."/>
            <person name="Kravitz S."/>
            <person name="Kulp D."/>
            <person name="Lai Z."/>
            <person name="Lasko P."/>
            <person name="Lei Y."/>
            <person name="Levitsky A.A."/>
            <person name="Li J.H."/>
            <person name="Li Z."/>
            <person name="Liang Y."/>
            <person name="Lin X."/>
            <person name="Liu X."/>
            <person name="Mattei B."/>
            <person name="McIntosh T.C."/>
            <person name="McLeod M.P."/>
            <person name="McPherson D."/>
            <person name="Merkulov G."/>
            <person name="Milshina N.V."/>
            <person name="Mobarry C."/>
            <person name="Morris J."/>
            <person name="Moshrefi A."/>
            <person name="Mount S.M."/>
            <person name="Moy M."/>
            <person name="Murphy B."/>
            <person name="Murphy L."/>
            <person name="Muzny D.M."/>
            <person name="Nelson D.L."/>
            <person name="Nelson D.R."/>
            <person name="Nelson K.A."/>
            <person name="Nixon K."/>
            <person name="Nusskern D.R."/>
            <person name="Pacleb J.M."/>
            <person name="Palazzolo M."/>
            <person name="Pittman G.S."/>
            <person name="Pan S."/>
            <person name="Pollard J."/>
            <person name="Puri V."/>
            <person name="Reese M.G."/>
            <person name="Reinert K."/>
            <person name="Remington K."/>
            <person name="Saunders R.D.C."/>
            <person name="Scheeler F."/>
            <person name="Shen H."/>
            <person name="Shue B.C."/>
            <person name="Siden-Kiamos I."/>
            <person name="Simpson M."/>
            <person name="Skupski M.P."/>
            <person name="Smith T.J."/>
            <person name="Spier E."/>
            <person name="Spradling A.C."/>
            <person name="Stapleton M."/>
            <person name="Strong R."/>
            <person name="Sun E."/>
            <person name="Svirskas R."/>
            <person name="Tector C."/>
            <person name="Turner R."/>
            <person name="Venter E."/>
            <person name="Wang A.H."/>
            <person name="Wang X."/>
            <person name="Wang Z.-Y."/>
            <person name="Wassarman D.A."/>
            <person name="Weinstock G.M."/>
            <person name="Weissenbach J."/>
            <person name="Williams S.M."/>
            <person name="Woodage T."/>
            <person name="Worley K.C."/>
            <person name="Wu D."/>
            <person name="Yang S."/>
            <person name="Yao Q.A."/>
            <person name="Ye J."/>
            <person name="Yeh R.-F."/>
            <person name="Zaveri J.S."/>
            <person name="Zhan M."/>
            <person name="Zhang G."/>
            <person name="Zhao Q."/>
            <person name="Zheng L."/>
            <person name="Zheng X.H."/>
            <person name="Zhong F.N."/>
            <person name="Zhong W."/>
            <person name="Zhou X."/>
            <person name="Zhu S.C."/>
            <person name="Zhu X."/>
            <person name="Smith H.O."/>
            <person name="Gibbs R.A."/>
            <person name="Myers E.W."/>
            <person name="Rubin G.M."/>
            <person name="Venter J.C."/>
        </authorList>
    </citation>
    <scope>NUCLEOTIDE SEQUENCE [LARGE SCALE GENOMIC DNA]</scope>
    <source>
        <strain>Berkeley</strain>
    </source>
</reference>
<reference key="3">
    <citation type="journal article" date="2002" name="Genome Biol.">
        <title>Annotation of the Drosophila melanogaster euchromatic genome: a systematic review.</title>
        <authorList>
            <person name="Misra S."/>
            <person name="Crosby M.A."/>
            <person name="Mungall C.J."/>
            <person name="Matthews B.B."/>
            <person name="Campbell K.S."/>
            <person name="Hradecky P."/>
            <person name="Huang Y."/>
            <person name="Kaminker J.S."/>
            <person name="Millburn G.H."/>
            <person name="Prochnik S.E."/>
            <person name="Smith C.D."/>
            <person name="Tupy J.L."/>
            <person name="Whitfield E.J."/>
            <person name="Bayraktaroglu L."/>
            <person name="Berman B.P."/>
            <person name="Bettencourt B.R."/>
            <person name="Celniker S.E."/>
            <person name="de Grey A.D.N.J."/>
            <person name="Drysdale R.A."/>
            <person name="Harris N.L."/>
            <person name="Richter J."/>
            <person name="Russo S."/>
            <person name="Schroeder A.J."/>
            <person name="Shu S.Q."/>
            <person name="Stapleton M."/>
            <person name="Yamada C."/>
            <person name="Ashburner M."/>
            <person name="Gelbart W.M."/>
            <person name="Rubin G.M."/>
            <person name="Lewis S.E."/>
        </authorList>
    </citation>
    <scope>GENOME REANNOTATION</scope>
    <source>
        <strain>Berkeley</strain>
    </source>
</reference>
<reference key="4">
    <citation type="submission" date="2006-03" db="EMBL/GenBank/DDBJ databases">
        <authorList>
            <person name="Stapleton M."/>
            <person name="Carlson J.W."/>
            <person name="Chavez C."/>
            <person name="Frise E."/>
            <person name="George R.A."/>
            <person name="Pacleb J.M."/>
            <person name="Park S."/>
            <person name="Wan K.H."/>
            <person name="Yu C."/>
            <person name="Celniker S.E."/>
        </authorList>
    </citation>
    <scope>NUCLEOTIDE SEQUENCE [LARGE SCALE MRNA]</scope>
    <source>
        <strain>Berkeley</strain>
    </source>
</reference>
<keyword id="KW-0104">Cadmium</keyword>
<keyword id="KW-0186">Copper</keyword>
<keyword id="KW-0479">Metal-binding</keyword>
<keyword id="KW-1185">Reference proteome</keyword>
<keyword id="KW-0862">Zinc</keyword>
<sequence>MGCKACGTNCQCSATKCGDNCACSQQCQCSCKNGPKDKCCSTKN</sequence>
<gene>
    <name type="primary">MtnD</name>
    <name type="ORF">CG33192</name>
</gene>
<name>MT4_DROME</name>
<comment type="function">
    <text evidence="1">This protein binds cations of several transition elements. Thought to be involved in metal ion homeostasis (By similarity).</text>
</comment>
<comment type="domain">
    <text>All cysteine residues are arranged in C-X-C groups. These are thought to be the metal-binding sites in other metallothioneins.</text>
</comment>
<comment type="similarity">
    <text evidence="2">Belongs to the metallothionein superfamily. Type 5 family.</text>
</comment>
<comment type="sequence caution" evidence="2">
    <conflict type="erroneous termination">
        <sequence resource="EMBL-CDS" id="ABE01242"/>
    </conflict>
    <text>Truncated C-terminus.</text>
</comment>
<accession>Q8I9B4</accession>
<accession>Q1WW94</accession>
<accession>Q86B88</accession>
<proteinExistence type="inferred from homology"/>